<accession>Q9QY61</accession>
<accession>A0JNT5</accession>
<accession>Q3V1B6</accession>
<evidence type="ECO:0000250" key="1"/>
<evidence type="ECO:0000255" key="2">
    <source>
        <dbReference type="PROSITE-ProRule" id="PRU00108"/>
    </source>
</evidence>
<evidence type="ECO:0000256" key="3">
    <source>
        <dbReference type="SAM" id="MobiDB-lite"/>
    </source>
</evidence>
<evidence type="ECO:0000269" key="4">
    <source>
    </source>
</evidence>
<evidence type="ECO:0000269" key="5">
    <source>
    </source>
</evidence>
<evidence type="ECO:0000305" key="6"/>
<protein>
    <recommendedName>
        <fullName>Iroquois-class homeodomain protein IRX-4</fullName>
    </recommendedName>
    <alternativeName>
        <fullName>Homeodomain protein IRXA3</fullName>
    </alternativeName>
    <alternativeName>
        <fullName>Iroquois homeobox protein 4</fullName>
    </alternativeName>
</protein>
<proteinExistence type="evidence at transcript level"/>
<gene>
    <name type="primary">Irx4</name>
    <name type="synonym">Irxa3</name>
</gene>
<sequence>MSYPQFGYPYSSAPQFLMTTNSLSTCCESGGRTLADSGPAASAQAPVYCPVYESRLLATARHELNSAAALGVYGSPYGSSQGYGNYVTYGSEASAFYSLNSFESKDGTGSSHAGLPPTAAAAYYPYEPALSQYPYDRYGTVDSGTRRKNATRETTSTLKAWLQEHRKNPYPTKGEKIMLAIITKMTLTQVSTWFANARRRLKKENKMTWPPRNKCADEKRPYGEGEEEEAGEEESREEPLKSAKSEGHAGKDDKELELSDLEDFDPLDAETSECELKTPFQSLDSGPERIPASSDGPGTGKEASTTLRMPLGTAGGAVMDGDLERARNCLRSTVVVPDSGAEGGPPACEAKLTFAQAGAPPNLETKPRIWSLAHTATAAAATALSQTEFPSCMLKRQGPTGVSATTPASSPAVTAPSGALDRHQDSPVTSLRNWVDGVFHDPILRHSTLNQAWATAKGALLDPGPLGRNLGAGTNVLTTPLACSFPPTVPQDVPPAGASRELLATPKAGGKPFCT</sequence>
<reference key="1">
    <citation type="journal article" date="2000" name="Dev. Biol.">
        <title>Cardiac expression of the ventricle-specific homeobox gene Irx4 is modulated by Nkx2-5 and dHand.</title>
        <authorList>
            <person name="Bruneau B.G."/>
            <person name="Bao Z.-Z."/>
            <person name="Tanaka M."/>
            <person name="Schott J.-J."/>
            <person name="Izumo S."/>
            <person name="Cepko C.L."/>
            <person name="Seidman J.G."/>
            <person name="Seidman C.E."/>
        </authorList>
    </citation>
    <scope>NUCLEOTIDE SEQUENCE [MRNA]</scope>
    <scope>PROBABLE FUNCTION</scope>
    <scope>TISSUE SPECIFICITY</scope>
    <source>
        <tissue>Embryonic heart</tissue>
    </source>
</reference>
<reference key="2">
    <citation type="journal article" date="2000" name="Dev. Biol.">
        <title>Patterning the embryonic heart: identification of five mouse Iroquois homeobox genes in the developing heart.</title>
        <authorList>
            <person name="Christoffels V.M."/>
            <person name="Keijser A.G.M."/>
            <person name="Houweling A.C."/>
            <person name="Clout D.E.W."/>
            <person name="Moorman A.F.M."/>
        </authorList>
    </citation>
    <scope>NUCLEOTIDE SEQUENCE [MRNA]</scope>
    <scope>TISSUE SPECIFICITY</scope>
    <source>
        <strain>FVB/N</strain>
        <tissue>Embryonic heart</tissue>
    </source>
</reference>
<reference key="3">
    <citation type="journal article" date="2005" name="Science">
        <title>The transcriptional landscape of the mammalian genome.</title>
        <authorList>
            <person name="Carninci P."/>
            <person name="Kasukawa T."/>
            <person name="Katayama S."/>
            <person name="Gough J."/>
            <person name="Frith M.C."/>
            <person name="Maeda N."/>
            <person name="Oyama R."/>
            <person name="Ravasi T."/>
            <person name="Lenhard B."/>
            <person name="Wells C."/>
            <person name="Kodzius R."/>
            <person name="Shimokawa K."/>
            <person name="Bajic V.B."/>
            <person name="Brenner S.E."/>
            <person name="Batalov S."/>
            <person name="Forrest A.R."/>
            <person name="Zavolan M."/>
            <person name="Davis M.J."/>
            <person name="Wilming L.G."/>
            <person name="Aidinis V."/>
            <person name="Allen J.E."/>
            <person name="Ambesi-Impiombato A."/>
            <person name="Apweiler R."/>
            <person name="Aturaliya R.N."/>
            <person name="Bailey T.L."/>
            <person name="Bansal M."/>
            <person name="Baxter L."/>
            <person name="Beisel K.W."/>
            <person name="Bersano T."/>
            <person name="Bono H."/>
            <person name="Chalk A.M."/>
            <person name="Chiu K.P."/>
            <person name="Choudhary V."/>
            <person name="Christoffels A."/>
            <person name="Clutterbuck D.R."/>
            <person name="Crowe M.L."/>
            <person name="Dalla E."/>
            <person name="Dalrymple B.P."/>
            <person name="de Bono B."/>
            <person name="Della Gatta G."/>
            <person name="di Bernardo D."/>
            <person name="Down T."/>
            <person name="Engstrom P."/>
            <person name="Fagiolini M."/>
            <person name="Faulkner G."/>
            <person name="Fletcher C.F."/>
            <person name="Fukushima T."/>
            <person name="Furuno M."/>
            <person name="Futaki S."/>
            <person name="Gariboldi M."/>
            <person name="Georgii-Hemming P."/>
            <person name="Gingeras T.R."/>
            <person name="Gojobori T."/>
            <person name="Green R.E."/>
            <person name="Gustincich S."/>
            <person name="Harbers M."/>
            <person name="Hayashi Y."/>
            <person name="Hensch T.K."/>
            <person name="Hirokawa N."/>
            <person name="Hill D."/>
            <person name="Huminiecki L."/>
            <person name="Iacono M."/>
            <person name="Ikeo K."/>
            <person name="Iwama A."/>
            <person name="Ishikawa T."/>
            <person name="Jakt M."/>
            <person name="Kanapin A."/>
            <person name="Katoh M."/>
            <person name="Kawasawa Y."/>
            <person name="Kelso J."/>
            <person name="Kitamura H."/>
            <person name="Kitano H."/>
            <person name="Kollias G."/>
            <person name="Krishnan S.P."/>
            <person name="Kruger A."/>
            <person name="Kummerfeld S.K."/>
            <person name="Kurochkin I.V."/>
            <person name="Lareau L.F."/>
            <person name="Lazarevic D."/>
            <person name="Lipovich L."/>
            <person name="Liu J."/>
            <person name="Liuni S."/>
            <person name="McWilliam S."/>
            <person name="Madan Babu M."/>
            <person name="Madera M."/>
            <person name="Marchionni L."/>
            <person name="Matsuda H."/>
            <person name="Matsuzawa S."/>
            <person name="Miki H."/>
            <person name="Mignone F."/>
            <person name="Miyake S."/>
            <person name="Morris K."/>
            <person name="Mottagui-Tabar S."/>
            <person name="Mulder N."/>
            <person name="Nakano N."/>
            <person name="Nakauchi H."/>
            <person name="Ng P."/>
            <person name="Nilsson R."/>
            <person name="Nishiguchi S."/>
            <person name="Nishikawa S."/>
            <person name="Nori F."/>
            <person name="Ohara O."/>
            <person name="Okazaki Y."/>
            <person name="Orlando V."/>
            <person name="Pang K.C."/>
            <person name="Pavan W.J."/>
            <person name="Pavesi G."/>
            <person name="Pesole G."/>
            <person name="Petrovsky N."/>
            <person name="Piazza S."/>
            <person name="Reed J."/>
            <person name="Reid J.F."/>
            <person name="Ring B.Z."/>
            <person name="Ringwald M."/>
            <person name="Rost B."/>
            <person name="Ruan Y."/>
            <person name="Salzberg S.L."/>
            <person name="Sandelin A."/>
            <person name="Schneider C."/>
            <person name="Schoenbach C."/>
            <person name="Sekiguchi K."/>
            <person name="Semple C.A."/>
            <person name="Seno S."/>
            <person name="Sessa L."/>
            <person name="Sheng Y."/>
            <person name="Shibata Y."/>
            <person name="Shimada H."/>
            <person name="Shimada K."/>
            <person name="Silva D."/>
            <person name="Sinclair B."/>
            <person name="Sperling S."/>
            <person name="Stupka E."/>
            <person name="Sugiura K."/>
            <person name="Sultana R."/>
            <person name="Takenaka Y."/>
            <person name="Taki K."/>
            <person name="Tammoja K."/>
            <person name="Tan S.L."/>
            <person name="Tang S."/>
            <person name="Taylor M.S."/>
            <person name="Tegner J."/>
            <person name="Teichmann S.A."/>
            <person name="Ueda H.R."/>
            <person name="van Nimwegen E."/>
            <person name="Verardo R."/>
            <person name="Wei C.L."/>
            <person name="Yagi K."/>
            <person name="Yamanishi H."/>
            <person name="Zabarovsky E."/>
            <person name="Zhu S."/>
            <person name="Zimmer A."/>
            <person name="Hide W."/>
            <person name="Bult C."/>
            <person name="Grimmond S.M."/>
            <person name="Teasdale R.D."/>
            <person name="Liu E.T."/>
            <person name="Brusic V."/>
            <person name="Quackenbush J."/>
            <person name="Wahlestedt C."/>
            <person name="Mattick J.S."/>
            <person name="Hume D.A."/>
            <person name="Kai C."/>
            <person name="Sasaki D."/>
            <person name="Tomaru Y."/>
            <person name="Fukuda S."/>
            <person name="Kanamori-Katayama M."/>
            <person name="Suzuki M."/>
            <person name="Aoki J."/>
            <person name="Arakawa T."/>
            <person name="Iida J."/>
            <person name="Imamura K."/>
            <person name="Itoh M."/>
            <person name="Kato T."/>
            <person name="Kawaji H."/>
            <person name="Kawagashira N."/>
            <person name="Kawashima T."/>
            <person name="Kojima M."/>
            <person name="Kondo S."/>
            <person name="Konno H."/>
            <person name="Nakano K."/>
            <person name="Ninomiya N."/>
            <person name="Nishio T."/>
            <person name="Okada M."/>
            <person name="Plessy C."/>
            <person name="Shibata K."/>
            <person name="Shiraki T."/>
            <person name="Suzuki S."/>
            <person name="Tagami M."/>
            <person name="Waki K."/>
            <person name="Watahiki A."/>
            <person name="Okamura-Oho Y."/>
            <person name="Suzuki H."/>
            <person name="Kawai J."/>
            <person name="Hayashizaki Y."/>
        </authorList>
    </citation>
    <scope>NUCLEOTIDE SEQUENCE [LARGE SCALE MRNA]</scope>
    <source>
        <strain>C57BL/6J</strain>
        <tissue>Head</tissue>
    </source>
</reference>
<reference key="4">
    <citation type="submission" date="2005-07" db="EMBL/GenBank/DDBJ databases">
        <authorList>
            <person name="Mural R.J."/>
            <person name="Adams M.D."/>
            <person name="Myers E.W."/>
            <person name="Smith H.O."/>
            <person name="Venter J.C."/>
        </authorList>
    </citation>
    <scope>NUCLEOTIDE SEQUENCE [LARGE SCALE GENOMIC DNA]</scope>
</reference>
<reference key="5">
    <citation type="journal article" date="2004" name="Genome Res.">
        <title>The status, quality, and expansion of the NIH full-length cDNA project: the Mammalian Gene Collection (MGC).</title>
        <authorList>
            <consortium name="The MGC Project Team"/>
        </authorList>
    </citation>
    <scope>NUCLEOTIDE SEQUENCE [LARGE SCALE MRNA]</scope>
</reference>
<reference key="6">
    <citation type="journal article" date="2007" name="Genes Dev.">
        <title>The prepattern transcription factor Irx3 directs nephron segment identity.</title>
        <authorList>
            <person name="Reggiani L."/>
            <person name="Raciti D."/>
            <person name="Airik R."/>
            <person name="Kispert A."/>
            <person name="Braendli A.W."/>
        </authorList>
    </citation>
    <scope>LACK OF RENAL EXPRESSION</scope>
</reference>
<dbReference type="EMBL" id="AF124732">
    <property type="protein sequence ID" value="AAF23886.1"/>
    <property type="molecule type" value="mRNA"/>
</dbReference>
<dbReference type="EMBL" id="AK132571">
    <property type="protein sequence ID" value="BAE21235.1"/>
    <property type="molecule type" value="mRNA"/>
</dbReference>
<dbReference type="EMBL" id="CH466563">
    <property type="protein sequence ID" value="EDL37045.1"/>
    <property type="molecule type" value="Genomic_DNA"/>
</dbReference>
<dbReference type="EMBL" id="BC126942">
    <property type="protein sequence ID" value="AAI26943.1"/>
    <property type="molecule type" value="mRNA"/>
</dbReference>
<dbReference type="CCDS" id="CCDS26629.1"/>
<dbReference type="RefSeq" id="NP_001413483.1">
    <property type="nucleotide sequence ID" value="NM_001426554.1"/>
</dbReference>
<dbReference type="RefSeq" id="NP_061373.1">
    <property type="nucleotide sequence ID" value="NM_018885.3"/>
</dbReference>
<dbReference type="RefSeq" id="XP_006517355.1">
    <property type="nucleotide sequence ID" value="XM_006517292.3"/>
</dbReference>
<dbReference type="RefSeq" id="XP_006517356.1">
    <property type="nucleotide sequence ID" value="XM_006517293.3"/>
</dbReference>
<dbReference type="RefSeq" id="XP_006517357.1">
    <property type="nucleotide sequence ID" value="XM_006517294.3"/>
</dbReference>
<dbReference type="RefSeq" id="XP_006517358.1">
    <property type="nucleotide sequence ID" value="XM_006517295.2"/>
</dbReference>
<dbReference type="RefSeq" id="XP_006517359.1">
    <property type="nucleotide sequence ID" value="XM_006517296.2"/>
</dbReference>
<dbReference type="SMR" id="Q9QY61"/>
<dbReference type="FunCoup" id="Q9QY61">
    <property type="interactions" value="225"/>
</dbReference>
<dbReference type="STRING" id="10090.ENSMUSP00000022095"/>
<dbReference type="iPTMnet" id="Q9QY61"/>
<dbReference type="PhosphoSitePlus" id="Q9QY61"/>
<dbReference type="PaxDb" id="10090-ENSMUSP00000022095"/>
<dbReference type="Antibodypedia" id="9116">
    <property type="antibodies" value="66 antibodies from 16 providers"/>
</dbReference>
<dbReference type="DNASU" id="50916"/>
<dbReference type="Ensembl" id="ENSMUST00000022095.10">
    <property type="protein sequence ID" value="ENSMUSP00000022095.8"/>
    <property type="gene ID" value="ENSMUSG00000021604.16"/>
</dbReference>
<dbReference type="Ensembl" id="ENSMUST00000176684.8">
    <property type="protein sequence ID" value="ENSMUSP00000134738.2"/>
    <property type="gene ID" value="ENSMUSG00000021604.16"/>
</dbReference>
<dbReference type="GeneID" id="50916"/>
<dbReference type="KEGG" id="mmu:50916"/>
<dbReference type="UCSC" id="uc007rdf.2">
    <property type="organism name" value="mouse"/>
</dbReference>
<dbReference type="AGR" id="MGI:1355275"/>
<dbReference type="CTD" id="50805"/>
<dbReference type="MGI" id="MGI:1355275">
    <property type="gene designation" value="Irx4"/>
</dbReference>
<dbReference type="VEuPathDB" id="HostDB:ENSMUSG00000021604"/>
<dbReference type="eggNOG" id="KOG0773">
    <property type="taxonomic scope" value="Eukaryota"/>
</dbReference>
<dbReference type="GeneTree" id="ENSGT00940000158596"/>
<dbReference type="HOGENOM" id="CLU_042927_1_1_1"/>
<dbReference type="InParanoid" id="Q9QY61"/>
<dbReference type="OMA" id="AEPPGCE"/>
<dbReference type="OrthoDB" id="5399138at2759"/>
<dbReference type="PhylomeDB" id="Q9QY61"/>
<dbReference type="TreeFam" id="TF319371"/>
<dbReference type="BioGRID-ORCS" id="50916">
    <property type="hits" value="2 hits in 79 CRISPR screens"/>
</dbReference>
<dbReference type="PRO" id="PR:Q9QY61"/>
<dbReference type="Proteomes" id="UP000000589">
    <property type="component" value="Chromosome 13"/>
</dbReference>
<dbReference type="RNAct" id="Q9QY61">
    <property type="molecule type" value="protein"/>
</dbReference>
<dbReference type="Bgee" id="ENSMUSG00000021604">
    <property type="expression patterns" value="Expressed in lip and 67 other cell types or tissues"/>
</dbReference>
<dbReference type="GO" id="GO:0005634">
    <property type="term" value="C:nucleus"/>
    <property type="evidence" value="ECO:0007669"/>
    <property type="project" value="UniProtKB-SubCell"/>
</dbReference>
<dbReference type="GO" id="GO:0005667">
    <property type="term" value="C:transcription regulator complex"/>
    <property type="evidence" value="ECO:0000250"/>
    <property type="project" value="MGI"/>
</dbReference>
<dbReference type="GO" id="GO:0003677">
    <property type="term" value="F:DNA binding"/>
    <property type="evidence" value="ECO:0007669"/>
    <property type="project" value="UniProtKB-KW"/>
</dbReference>
<dbReference type="GO" id="GO:0000981">
    <property type="term" value="F:DNA-binding transcription factor activity, RNA polymerase II-specific"/>
    <property type="evidence" value="ECO:0007669"/>
    <property type="project" value="InterPro"/>
</dbReference>
<dbReference type="GO" id="GO:0030154">
    <property type="term" value="P:cell differentiation"/>
    <property type="evidence" value="ECO:0007669"/>
    <property type="project" value="UniProtKB-KW"/>
</dbReference>
<dbReference type="GO" id="GO:0048561">
    <property type="term" value="P:establishment of animal organ orientation"/>
    <property type="evidence" value="ECO:0007669"/>
    <property type="project" value="Ensembl"/>
</dbReference>
<dbReference type="GO" id="GO:0007507">
    <property type="term" value="P:heart development"/>
    <property type="evidence" value="ECO:0000315"/>
    <property type="project" value="MGI"/>
</dbReference>
<dbReference type="GO" id="GO:0000122">
    <property type="term" value="P:negative regulation of transcription by RNA polymerase II"/>
    <property type="evidence" value="ECO:0007669"/>
    <property type="project" value="Ensembl"/>
</dbReference>
<dbReference type="GO" id="GO:0006357">
    <property type="term" value="P:regulation of transcription by RNA polymerase II"/>
    <property type="evidence" value="ECO:0000250"/>
    <property type="project" value="MGI"/>
</dbReference>
<dbReference type="CDD" id="cd00086">
    <property type="entry name" value="homeodomain"/>
    <property type="match status" value="1"/>
</dbReference>
<dbReference type="FunFam" id="1.10.10.60:FF:000003">
    <property type="entry name" value="Iroquois-class homeobox protein IRX"/>
    <property type="match status" value="1"/>
</dbReference>
<dbReference type="Gene3D" id="1.10.10.60">
    <property type="entry name" value="Homeodomain-like"/>
    <property type="match status" value="1"/>
</dbReference>
<dbReference type="InterPro" id="IPR001356">
    <property type="entry name" value="HD"/>
</dbReference>
<dbReference type="InterPro" id="IPR017970">
    <property type="entry name" value="Homeobox_CS"/>
</dbReference>
<dbReference type="InterPro" id="IPR009057">
    <property type="entry name" value="Homeodomain-like_sf"/>
</dbReference>
<dbReference type="InterPro" id="IPR003893">
    <property type="entry name" value="Iroquois_homeo"/>
</dbReference>
<dbReference type="InterPro" id="IPR008422">
    <property type="entry name" value="KN_HD"/>
</dbReference>
<dbReference type="PANTHER" id="PTHR11211">
    <property type="entry name" value="IROQUOIS-CLASS HOMEODOMAIN PROTEIN IRX"/>
    <property type="match status" value="1"/>
</dbReference>
<dbReference type="PANTHER" id="PTHR11211:SF16">
    <property type="entry name" value="IROQUOIS-CLASS HOMEODOMAIN PROTEIN IRX-4"/>
    <property type="match status" value="1"/>
</dbReference>
<dbReference type="Pfam" id="PF05920">
    <property type="entry name" value="Homeobox_KN"/>
    <property type="match status" value="1"/>
</dbReference>
<dbReference type="SMART" id="SM00389">
    <property type="entry name" value="HOX"/>
    <property type="match status" value="1"/>
</dbReference>
<dbReference type="SMART" id="SM00548">
    <property type="entry name" value="IRO"/>
    <property type="match status" value="1"/>
</dbReference>
<dbReference type="SUPFAM" id="SSF46689">
    <property type="entry name" value="Homeodomain-like"/>
    <property type="match status" value="1"/>
</dbReference>
<dbReference type="PROSITE" id="PS00027">
    <property type="entry name" value="HOMEOBOX_1"/>
    <property type="match status" value="1"/>
</dbReference>
<dbReference type="PROSITE" id="PS50071">
    <property type="entry name" value="HOMEOBOX_2"/>
    <property type="match status" value="1"/>
</dbReference>
<name>IRX4_MOUSE</name>
<feature type="chain" id="PRO_0000049158" description="Iroquois-class homeodomain protein IRX-4">
    <location>
        <begin position="1"/>
        <end position="515"/>
    </location>
</feature>
<feature type="DNA-binding region" description="Homeobox; TALE-type" evidence="2">
    <location>
        <begin position="144"/>
        <end position="205"/>
    </location>
</feature>
<feature type="region of interest" description="Disordered" evidence="3">
    <location>
        <begin position="205"/>
        <end position="258"/>
    </location>
</feature>
<feature type="region of interest" description="Disordered" evidence="3">
    <location>
        <begin position="278"/>
        <end position="307"/>
    </location>
</feature>
<feature type="region of interest" description="Disordered" evidence="3">
    <location>
        <begin position="398"/>
        <end position="425"/>
    </location>
</feature>
<feature type="compositionally biased region" description="Basic and acidic residues" evidence="3">
    <location>
        <begin position="214"/>
        <end position="223"/>
    </location>
</feature>
<feature type="compositionally biased region" description="Acidic residues" evidence="3">
    <location>
        <begin position="224"/>
        <end position="236"/>
    </location>
</feature>
<feature type="compositionally biased region" description="Basic and acidic residues" evidence="3">
    <location>
        <begin position="237"/>
        <end position="257"/>
    </location>
</feature>
<feature type="compositionally biased region" description="Low complexity" evidence="3">
    <location>
        <begin position="399"/>
        <end position="419"/>
    </location>
</feature>
<feature type="sequence conflict" description="In Ref. 3; BAE21235." evidence="6" ref="3">
    <original>C</original>
    <variation>Y</variation>
    <location>
        <position position="215"/>
    </location>
</feature>
<comment type="function">
    <text>Likely to be an important mediator of ventricular differentiation during cardiac development.</text>
</comment>
<comment type="subunit">
    <text evidence="1">Interacts with the vitamin D receptor VDR but doesn't affect its transactivation activity.</text>
</comment>
<comment type="subcellular location">
    <subcellularLocation>
        <location evidence="6">Nucleus</location>
    </subcellularLocation>
</comment>
<comment type="tissue specificity">
    <text evidence="4 5">Expressed in the developing central nervous system, skin, and vibrissae, but predominantly expressed in the cardiac ventricles of the developing heart. Not expressed in the developing metanephric kidney or adult kidney.</text>
</comment>
<comment type="similarity">
    <text evidence="6">Belongs to the TALE/IRO homeobox family.</text>
</comment>
<keyword id="KW-0217">Developmental protein</keyword>
<keyword id="KW-0221">Differentiation</keyword>
<keyword id="KW-0238">DNA-binding</keyword>
<keyword id="KW-0371">Homeobox</keyword>
<keyword id="KW-0539">Nucleus</keyword>
<keyword id="KW-1185">Reference proteome</keyword>
<organism>
    <name type="scientific">Mus musculus</name>
    <name type="common">Mouse</name>
    <dbReference type="NCBI Taxonomy" id="10090"/>
    <lineage>
        <taxon>Eukaryota</taxon>
        <taxon>Metazoa</taxon>
        <taxon>Chordata</taxon>
        <taxon>Craniata</taxon>
        <taxon>Vertebrata</taxon>
        <taxon>Euteleostomi</taxon>
        <taxon>Mammalia</taxon>
        <taxon>Eutheria</taxon>
        <taxon>Euarchontoglires</taxon>
        <taxon>Glires</taxon>
        <taxon>Rodentia</taxon>
        <taxon>Myomorpha</taxon>
        <taxon>Muroidea</taxon>
        <taxon>Muridae</taxon>
        <taxon>Murinae</taxon>
        <taxon>Mus</taxon>
        <taxon>Mus</taxon>
    </lineage>
</organism>